<gene>
    <name evidence="23" type="primary">AOX1</name>
    <name type="synonym">AO</name>
</gene>
<feature type="chain" id="PRO_0000166104" description="Aldehyde oxidase">
    <location>
        <begin position="1"/>
        <end position="1338"/>
    </location>
</feature>
<feature type="domain" description="2Fe-2S ferredoxin-type" evidence="2">
    <location>
        <begin position="5"/>
        <end position="92"/>
    </location>
</feature>
<feature type="domain" description="FAD-binding PCMH-type" evidence="3">
    <location>
        <begin position="236"/>
        <end position="421"/>
    </location>
</feature>
<feature type="active site" description="Proton acceptor; for azaheterocycle hydroxylase activity" evidence="1">
    <location>
        <position position="1270"/>
    </location>
</feature>
<feature type="binding site" evidence="13 24">
    <location>
        <position position="44"/>
    </location>
    <ligand>
        <name>[2Fe-2S] cluster</name>
        <dbReference type="ChEBI" id="CHEBI:190135"/>
        <label>1</label>
    </ligand>
</feature>
<feature type="binding site" evidence="13 14 24 25 26">
    <location>
        <position position="49"/>
    </location>
    <ligand>
        <name>[2Fe-2S] cluster</name>
        <dbReference type="ChEBI" id="CHEBI:190135"/>
        <label>1</label>
    </ligand>
</feature>
<feature type="binding site" evidence="13 14 24 25 26">
    <location>
        <position position="52"/>
    </location>
    <ligand>
        <name>[2Fe-2S] cluster</name>
        <dbReference type="ChEBI" id="CHEBI:190135"/>
        <label>1</label>
    </ligand>
</feature>
<feature type="binding site" evidence="13 14 24 25 26">
    <location>
        <position position="74"/>
    </location>
    <ligand>
        <name>[2Fe-2S] cluster</name>
        <dbReference type="ChEBI" id="CHEBI:190135"/>
        <label>1</label>
    </ligand>
</feature>
<feature type="binding site" evidence="13 24 25">
    <location>
        <position position="113"/>
    </location>
    <ligand>
        <name>Mo-molybdopterin</name>
        <dbReference type="ChEBI" id="CHEBI:71302"/>
    </ligand>
</feature>
<feature type="binding site" evidence="13 14 24 25 26">
    <location>
        <position position="114"/>
    </location>
    <ligand>
        <name>[2Fe-2S] cluster</name>
        <dbReference type="ChEBI" id="CHEBI:190135"/>
        <label>2</label>
    </ligand>
</feature>
<feature type="binding site" evidence="13 14 24 25 26">
    <location>
        <position position="117"/>
    </location>
    <ligand>
        <name>[2Fe-2S] cluster</name>
        <dbReference type="ChEBI" id="CHEBI:190135"/>
        <label>2</label>
    </ligand>
</feature>
<feature type="binding site" evidence="13 14 24 25 26">
    <location>
        <position position="149"/>
    </location>
    <ligand>
        <name>[2Fe-2S] cluster</name>
        <dbReference type="ChEBI" id="CHEBI:190135"/>
        <label>2</label>
    </ligand>
</feature>
<feature type="binding site" evidence="13 14 24 25 26">
    <location>
        <position position="151"/>
    </location>
    <ligand>
        <name>[2Fe-2S] cluster</name>
        <dbReference type="ChEBI" id="CHEBI:190135"/>
        <label>2</label>
    </ligand>
</feature>
<feature type="binding site" evidence="13 14 24 25 26">
    <location>
        <position position="151"/>
    </location>
    <ligand>
        <name>Mo-molybdopterin</name>
        <dbReference type="ChEBI" id="CHEBI:71302"/>
    </ligand>
</feature>
<feature type="binding site" evidence="13 14 24 25 26">
    <location>
        <begin position="264"/>
        <end position="271"/>
    </location>
    <ligand>
        <name>FAD</name>
        <dbReference type="ChEBI" id="CHEBI:57692"/>
    </ligand>
</feature>
<feature type="binding site" evidence="13 24 25">
    <location>
        <position position="345"/>
    </location>
    <ligand>
        <name>FAD</name>
        <dbReference type="ChEBI" id="CHEBI:57692"/>
    </ligand>
</feature>
<feature type="binding site" evidence="13 14 24 25 26">
    <location>
        <position position="354"/>
    </location>
    <ligand>
        <name>FAD</name>
        <dbReference type="ChEBI" id="CHEBI:57692"/>
    </ligand>
</feature>
<feature type="binding site" evidence="13 14 26">
    <location>
        <position position="358"/>
    </location>
    <ligand>
        <name>FAD</name>
        <dbReference type="ChEBI" id="CHEBI:57692"/>
    </ligand>
</feature>
<feature type="binding site" evidence="13 14 24 25 26">
    <location>
        <position position="367"/>
    </location>
    <ligand>
        <name>FAD</name>
        <dbReference type="ChEBI" id="CHEBI:57692"/>
    </ligand>
</feature>
<feature type="binding site" evidence="13 14 24 25 26">
    <location>
        <position position="411"/>
    </location>
    <ligand>
        <name>FAD</name>
        <dbReference type="ChEBI" id="CHEBI:57692"/>
    </ligand>
</feature>
<feature type="binding site" evidence="13 14 24 25 26">
    <location>
        <begin position="806"/>
        <end position="807"/>
    </location>
    <ligand>
        <name>Mo-molybdopterin</name>
        <dbReference type="ChEBI" id="CHEBI:71302"/>
    </ligand>
</feature>
<feature type="binding site" evidence="13 14 24 25 26">
    <location>
        <position position="1047"/>
    </location>
    <ligand>
        <name>Mo-molybdopterin</name>
        <dbReference type="ChEBI" id="CHEBI:71302"/>
    </ligand>
</feature>
<feature type="binding site" evidence="13 14 24 25 26">
    <location>
        <begin position="1088"/>
        <end position="1091"/>
    </location>
    <ligand>
        <name>Mo-molybdopterin</name>
        <dbReference type="ChEBI" id="CHEBI:71302"/>
    </ligand>
</feature>
<feature type="binding site" evidence="13 14 24 25 26">
    <location>
        <position position="1203"/>
    </location>
    <ligand>
        <name>Mo-molybdopterin</name>
        <dbReference type="ChEBI" id="CHEBI:71302"/>
    </ligand>
</feature>
<feature type="binding site" evidence="13 25">
    <location>
        <position position="1268"/>
    </location>
    <ligand>
        <name>Mo-molybdopterin</name>
        <dbReference type="ChEBI" id="CHEBI:71302"/>
    </ligand>
</feature>
<feature type="modified residue" description="Phosphoserine" evidence="27">
    <location>
        <position position="1068"/>
    </location>
</feature>
<feature type="sequence variant" id="VAR_061136" description="In dbSNP:rs58185012.">
    <original>Q</original>
    <variation>R</variation>
    <location>
        <position position="314"/>
    </location>
</feature>
<feature type="sequence variant" id="VAR_047517" description="Decreases homodimerization but nearly no effect on kinetic parameters; dbSNP:rs41309768." evidence="9">
    <original>R</original>
    <variation>C</variation>
    <location>
        <position position="802"/>
    </location>
</feature>
<feature type="sequence variant" id="VAR_070256" description="Increases homodimerization; abolishes enzymatic activity on phenanthridine; decreases turnover number with benzaldehyde, phtalazine and chloroquinazolinone as substrate, while nearly no effect on the KM; dbSNP:rs56199635." evidence="9">
    <original>R</original>
    <variation>H</variation>
    <location>
        <position position="921"/>
    </location>
</feature>
<feature type="sequence variant" id="VAR_070257" description="Increases homodimerization and turnover number with phenanthridine as substrate; nearly no effect on kinetic parameters with benzaldehyde, phtalazine and chloroquinazolinone as substrate; dbSNP:rs55754655." evidence="9">
    <original>N</original>
    <variation>S</variation>
    <location>
        <position position="1135"/>
    </location>
</feature>
<feature type="sequence variant" id="VAR_070258" description="No effect on dimerization; no effect on oxidase activity; dbSNP:rs141786030." evidence="9 14">
    <original>S</original>
    <variation>L</variation>
    <location>
        <position position="1271"/>
    </location>
</feature>
<feature type="sequence variant" id="VAR_047518" description="Increases homodimerization and turnover number with phenanthridine as substrate; nearly no effect on kinetic parameters with benzaldehyde, phtalazine and chloroquinazolinone as substrate; dbSNP:rs3731722." evidence="9">
    <original>H</original>
    <variation>R</variation>
    <location>
        <position position="1297"/>
    </location>
</feature>
<feature type="mutagenesis site" description="Disrupts protein stability." evidence="14">
    <original>C</original>
    <variation>W</variation>
    <location>
        <position position="44"/>
    </location>
</feature>
<feature type="mutagenesis site" description="No effect on dimerization. Loss of oxidase activity." evidence="14">
    <original>G</original>
    <variation>R</variation>
    <location>
        <position position="1269"/>
    </location>
</feature>
<feature type="sequence conflict" description="In Ref. 1; AAA96650 and 2; AAB83966." evidence="18" ref="1 2">
    <original>K</original>
    <variation>P</variation>
    <location>
        <position position="41"/>
    </location>
</feature>
<feature type="sequence conflict" description="In Ref. 1; AAA96650 and 2; AAB83966." evidence="18" ref="1 2">
    <original>T</original>
    <variation>P</variation>
    <location>
        <position position="127"/>
    </location>
</feature>
<feature type="sequence conflict" description="In Ref. 1; AAA96650 and 2; AAB83966." evidence="18" ref="1 2">
    <original>T</original>
    <variation>H</variation>
    <location>
        <position position="152"/>
    </location>
</feature>
<feature type="sequence conflict" description="In Ref. 1; AAA96650 and 2; AAB83966." evidence="18" ref="1 2">
    <original>E</original>
    <variation>D</variation>
    <location>
        <position position="227"/>
    </location>
</feature>
<feature type="sequence conflict" description="In Ref. 1; AAA96650." evidence="18" ref="1">
    <original>E</original>
    <variation>D</variation>
    <location>
        <position position="251"/>
    </location>
</feature>
<feature type="sequence conflict" description="In Ref. 1; AAA96650 and 2; AAB83966." evidence="18" ref="1 2">
    <original>Y</original>
    <variation>I</variation>
    <location>
        <position position="418"/>
    </location>
</feature>
<feature type="sequence conflict" description="In Ref. 2; AAB83966." evidence="18" ref="2">
    <original>V</original>
    <variation>L</variation>
    <location>
        <position position="501"/>
    </location>
</feature>
<feature type="sequence conflict" description="In Ref. 2; AAB83966." evidence="18" ref="2">
    <original>I</original>
    <variation>N</variation>
    <location>
        <position position="627"/>
    </location>
</feature>
<feature type="sequence conflict" description="In Ref. 1; AAA96650 and 2; AAB83966." evidence="18" ref="1 2">
    <original>A</original>
    <variation>V</variation>
    <location>
        <position position="929"/>
    </location>
</feature>
<feature type="sequence conflict" description="In Ref. 1; AAA96650 and 2; AAB83966." evidence="18" ref="1 2">
    <original>G</original>
    <variation>A</variation>
    <location>
        <position position="1019"/>
    </location>
</feature>
<feature type="strand" evidence="28">
    <location>
        <begin position="6"/>
        <end position="11"/>
    </location>
</feature>
<feature type="strand" evidence="28">
    <location>
        <begin position="14"/>
        <end position="20"/>
    </location>
</feature>
<feature type="helix" evidence="28">
    <location>
        <begin position="27"/>
        <end position="33"/>
    </location>
</feature>
<feature type="strand" evidence="28">
    <location>
        <begin position="45"/>
        <end position="49"/>
    </location>
</feature>
<feature type="strand" evidence="28">
    <location>
        <begin position="53"/>
        <end position="60"/>
    </location>
</feature>
<feature type="turn" evidence="28">
    <location>
        <begin position="61"/>
        <end position="64"/>
    </location>
</feature>
<feature type="strand" evidence="28">
    <location>
        <begin position="65"/>
        <end position="72"/>
    </location>
</feature>
<feature type="helix" evidence="28">
    <location>
        <begin position="73"/>
        <end position="75"/>
    </location>
</feature>
<feature type="helix" evidence="28">
    <location>
        <begin position="78"/>
        <end position="81"/>
    </location>
</feature>
<feature type="strand" evidence="28">
    <location>
        <begin position="85"/>
        <end position="87"/>
    </location>
</feature>
<feature type="helix" evidence="28">
    <location>
        <begin position="89"/>
        <end position="92"/>
    </location>
</feature>
<feature type="strand" evidence="29">
    <location>
        <begin position="95"/>
        <end position="97"/>
    </location>
</feature>
<feature type="helix" evidence="28">
    <location>
        <begin position="101"/>
        <end position="108"/>
    </location>
</feature>
<feature type="strand" evidence="32">
    <location>
        <begin position="113"/>
        <end position="117"/>
    </location>
</feature>
<feature type="helix" evidence="28">
    <location>
        <begin position="118"/>
        <end position="131"/>
    </location>
</feature>
<feature type="helix" evidence="28">
    <location>
        <begin position="137"/>
        <end position="143"/>
    </location>
</feature>
<feature type="helix" evidence="28">
    <location>
        <begin position="144"/>
        <end position="146"/>
    </location>
</feature>
<feature type="strand" evidence="28">
    <location>
        <begin position="150"/>
        <end position="152"/>
    </location>
</feature>
<feature type="helix" evidence="28">
    <location>
        <begin position="155"/>
        <end position="162"/>
    </location>
</feature>
<feature type="turn" evidence="31">
    <location>
        <begin position="163"/>
        <end position="165"/>
    </location>
</feature>
<feature type="helix" evidence="28">
    <location>
        <begin position="204"/>
        <end position="206"/>
    </location>
</feature>
<feature type="helix" evidence="29">
    <location>
        <begin position="212"/>
        <end position="214"/>
    </location>
</feature>
<feature type="helix" evidence="28">
    <location>
        <begin position="220"/>
        <end position="226"/>
    </location>
</feature>
<feature type="strand" evidence="28">
    <location>
        <begin position="234"/>
        <end position="237"/>
    </location>
</feature>
<feature type="strand" evidence="28">
    <location>
        <begin position="242"/>
        <end position="245"/>
    </location>
</feature>
<feature type="helix" evidence="28">
    <location>
        <begin position="249"/>
        <end position="258"/>
    </location>
</feature>
<feature type="helix" evidence="28">
    <location>
        <begin position="271"/>
        <end position="277"/>
    </location>
</feature>
<feature type="strand" evidence="28">
    <location>
        <begin position="283"/>
        <end position="286"/>
    </location>
</feature>
<feature type="helix" evidence="28">
    <location>
        <begin position="292"/>
        <end position="295"/>
    </location>
</feature>
<feature type="strand" evidence="28">
    <location>
        <begin position="297"/>
        <end position="299"/>
    </location>
</feature>
<feature type="strand" evidence="28">
    <location>
        <begin position="301"/>
        <end position="307"/>
    </location>
</feature>
<feature type="helix" evidence="28">
    <location>
        <begin position="312"/>
        <end position="325"/>
    </location>
</feature>
<feature type="turn" evidence="31">
    <location>
        <begin position="328"/>
        <end position="330"/>
    </location>
</feature>
<feature type="helix" evidence="28">
    <location>
        <begin position="332"/>
        <end position="343"/>
    </location>
</feature>
<feature type="helix" evidence="28">
    <location>
        <begin position="347"/>
        <end position="352"/>
    </location>
</feature>
<feature type="helix" evidence="28">
    <location>
        <begin position="355"/>
        <end position="361"/>
    </location>
</feature>
<feature type="helix" evidence="28">
    <location>
        <begin position="369"/>
        <end position="374"/>
    </location>
</feature>
<feature type="strand" evidence="28">
    <location>
        <begin position="378"/>
        <end position="382"/>
    </location>
</feature>
<feature type="strand" evidence="28">
    <location>
        <begin position="387"/>
        <end position="391"/>
    </location>
</feature>
<feature type="helix" evidence="28">
    <location>
        <begin position="394"/>
        <end position="397"/>
    </location>
</feature>
<feature type="turn" evidence="28">
    <location>
        <begin position="401"/>
        <end position="403"/>
    </location>
</feature>
<feature type="strand" evidence="28">
    <location>
        <begin position="410"/>
        <end position="417"/>
    </location>
</feature>
<feature type="strand" evidence="28">
    <location>
        <begin position="423"/>
        <end position="430"/>
    </location>
</feature>
<feature type="strand" evidence="28">
    <location>
        <begin position="432"/>
        <end position="437"/>
    </location>
</feature>
<feature type="strand" evidence="28">
    <location>
        <begin position="440"/>
        <end position="448"/>
    </location>
</feature>
<feature type="strand" evidence="28">
    <location>
        <begin position="451"/>
        <end position="453"/>
    </location>
</feature>
<feature type="strand" evidence="28">
    <location>
        <begin position="458"/>
        <end position="469"/>
    </location>
</feature>
<feature type="helix" evidence="28">
    <location>
        <begin position="474"/>
        <end position="480"/>
    </location>
</feature>
<feature type="strand" evidence="31">
    <location>
        <begin position="484"/>
        <end position="486"/>
    </location>
</feature>
<feature type="helix" evidence="28">
    <location>
        <begin position="487"/>
        <end position="498"/>
    </location>
</feature>
<feature type="helix" evidence="28">
    <location>
        <begin position="512"/>
        <end position="537"/>
    </location>
</feature>
<feature type="turn" evidence="28">
    <location>
        <begin position="539"/>
        <end position="541"/>
    </location>
</feature>
<feature type="turn" evidence="28">
    <location>
        <begin position="547"/>
        <end position="549"/>
    </location>
</feature>
<feature type="helix" evidence="28">
    <location>
        <begin position="550"/>
        <end position="552"/>
    </location>
</feature>
<feature type="strand" evidence="28">
    <location>
        <begin position="562"/>
        <end position="566"/>
    </location>
</feature>
<feature type="strand" evidence="29">
    <location>
        <begin position="572"/>
        <end position="574"/>
    </location>
</feature>
<feature type="helix" evidence="28">
    <location>
        <begin position="589"/>
        <end position="593"/>
    </location>
</feature>
<feature type="helix" evidence="28">
    <location>
        <begin position="600"/>
        <end position="602"/>
    </location>
</feature>
<feature type="strand" evidence="28">
    <location>
        <begin position="610"/>
        <end position="616"/>
    </location>
</feature>
<feature type="strand" evidence="28">
    <location>
        <begin position="620"/>
        <end position="628"/>
    </location>
</feature>
<feature type="helix" evidence="28">
    <location>
        <begin position="630"/>
        <end position="633"/>
    </location>
</feature>
<feature type="strand" evidence="28">
    <location>
        <begin position="638"/>
        <end position="642"/>
    </location>
</feature>
<feature type="helix" evidence="28">
    <location>
        <begin position="644"/>
        <end position="646"/>
    </location>
</feature>
<feature type="helix" evidence="28">
    <location>
        <begin position="648"/>
        <end position="650"/>
    </location>
</feature>
<feature type="strand" evidence="31">
    <location>
        <begin position="651"/>
        <end position="663"/>
    </location>
</feature>
<feature type="strand" evidence="28">
    <location>
        <begin position="666"/>
        <end position="668"/>
    </location>
</feature>
<feature type="strand" evidence="28">
    <location>
        <begin position="674"/>
        <end position="682"/>
    </location>
</feature>
<feature type="helix" evidence="28">
    <location>
        <begin position="683"/>
        <end position="690"/>
    </location>
</feature>
<feature type="strand" evidence="28">
    <location>
        <begin position="694"/>
        <end position="699"/>
    </location>
</feature>
<feature type="helix" evidence="28">
    <location>
        <begin position="709"/>
        <end position="711"/>
    </location>
</feature>
<feature type="strand" evidence="28">
    <location>
        <begin position="721"/>
        <end position="726"/>
    </location>
</feature>
<feature type="helix" evidence="28">
    <location>
        <begin position="728"/>
        <end position="731"/>
    </location>
</feature>
<feature type="helix" evidence="28">
    <location>
        <begin position="732"/>
        <end position="734"/>
    </location>
</feature>
<feature type="strand" evidence="28">
    <location>
        <begin position="736"/>
        <end position="745"/>
    </location>
</feature>
<feature type="strand" evidence="28">
    <location>
        <begin position="756"/>
        <end position="762"/>
    </location>
</feature>
<feature type="strand" evidence="28">
    <location>
        <begin position="769"/>
        <end position="773"/>
    </location>
</feature>
<feature type="helix" evidence="28">
    <location>
        <begin position="778"/>
        <end position="789"/>
    </location>
</feature>
<feature type="helix" evidence="28">
    <location>
        <begin position="793"/>
        <end position="795"/>
    </location>
</feature>
<feature type="strand" evidence="28">
    <location>
        <begin position="796"/>
        <end position="801"/>
    </location>
</feature>
<feature type="helix" evidence="28">
    <location>
        <begin position="812"/>
        <end position="828"/>
    </location>
</feature>
<feature type="strand" evidence="28">
    <location>
        <begin position="832"/>
        <end position="835"/>
    </location>
</feature>
<feature type="helix" evidence="28">
    <location>
        <begin position="838"/>
        <end position="844"/>
    </location>
</feature>
<feature type="strand" evidence="28">
    <location>
        <begin position="851"/>
        <end position="859"/>
    </location>
</feature>
<feature type="strand" evidence="28">
    <location>
        <begin position="865"/>
        <end position="878"/>
    </location>
</feature>
<feature type="helix" evidence="28">
    <location>
        <begin position="884"/>
        <end position="893"/>
    </location>
</feature>
<feature type="turn" evidence="28">
    <location>
        <begin position="894"/>
        <end position="897"/>
    </location>
</feature>
<feature type="strand" evidence="28">
    <location>
        <begin position="901"/>
        <end position="911"/>
    </location>
</feature>
<feature type="turn" evidence="28">
    <location>
        <begin position="921"/>
        <end position="924"/>
    </location>
</feature>
<feature type="helix" evidence="28">
    <location>
        <begin position="925"/>
        <end position="943"/>
    </location>
</feature>
<feature type="helix" evidence="28">
    <location>
        <begin position="947"/>
        <end position="954"/>
    </location>
</feature>
<feature type="strand" evidence="28">
    <location>
        <begin position="958"/>
        <end position="961"/>
    </location>
</feature>
<feature type="strand" evidence="28">
    <location>
        <begin position="967"/>
        <end position="969"/>
    </location>
</feature>
<feature type="helix" evidence="28">
    <location>
        <begin position="971"/>
        <end position="984"/>
    </location>
</feature>
<feature type="helix" evidence="28">
    <location>
        <begin position="986"/>
        <end position="999"/>
    </location>
</feature>
<feature type="strand" evidence="28">
    <location>
        <begin position="1001"/>
        <end position="1016"/>
    </location>
</feature>
<feature type="strand" evidence="31">
    <location>
        <begin position="1019"/>
        <end position="1021"/>
    </location>
</feature>
<feature type="helix" evidence="28">
    <location>
        <begin position="1022"/>
        <end position="1024"/>
    </location>
</feature>
<feature type="strand" evidence="28">
    <location>
        <begin position="1026"/>
        <end position="1032"/>
    </location>
</feature>
<feature type="strand" evidence="32">
    <location>
        <begin position="1034"/>
        <end position="1036"/>
    </location>
</feature>
<feature type="strand" evidence="28">
    <location>
        <begin position="1038"/>
        <end position="1043"/>
    </location>
</feature>
<feature type="strand" evidence="28">
    <location>
        <begin position="1047"/>
        <end position="1049"/>
    </location>
</feature>
<feature type="helix" evidence="28">
    <location>
        <begin position="1051"/>
        <end position="1062"/>
    </location>
</feature>
<feature type="helix" evidence="28">
    <location>
        <begin position="1067"/>
        <end position="1069"/>
    </location>
</feature>
<feature type="strand" evidence="32">
    <location>
        <begin position="1070"/>
        <end position="1072"/>
    </location>
</feature>
<feature type="turn" evidence="28">
    <location>
        <begin position="1077"/>
        <end position="1079"/>
    </location>
</feature>
<feature type="strand" evidence="30">
    <location>
        <begin position="1088"/>
        <end position="1090"/>
    </location>
</feature>
<feature type="helix" evidence="28">
    <location>
        <begin position="1091"/>
        <end position="1115"/>
    </location>
</feature>
<feature type="strand" evidence="30">
    <location>
        <begin position="1118"/>
        <end position="1120"/>
    </location>
</feature>
<feature type="helix" evidence="28">
    <location>
        <begin position="1122"/>
        <end position="1131"/>
    </location>
</feature>
<feature type="strand" evidence="28">
    <location>
        <begin position="1137"/>
        <end position="1142"/>
    </location>
</feature>
<feature type="strand" evidence="28">
    <location>
        <begin position="1148"/>
        <end position="1150"/>
    </location>
</feature>
<feature type="turn" evidence="28">
    <location>
        <begin position="1151"/>
        <end position="1154"/>
    </location>
</feature>
<feature type="strand" evidence="28">
    <location>
        <begin position="1155"/>
        <end position="1157"/>
    </location>
</feature>
<feature type="strand" evidence="28">
    <location>
        <begin position="1160"/>
        <end position="1174"/>
    </location>
</feature>
<feature type="turn" evidence="28">
    <location>
        <begin position="1175"/>
        <end position="1177"/>
    </location>
</feature>
<feature type="strand" evidence="28">
    <location>
        <begin position="1180"/>
        <end position="1190"/>
    </location>
</feature>
<feature type="helix" evidence="28">
    <location>
        <begin position="1197"/>
        <end position="1215"/>
    </location>
</feature>
<feature type="helix" evidence="28">
    <location>
        <begin position="1232"/>
        <end position="1234"/>
    </location>
</feature>
<feature type="helix" evidence="28">
    <location>
        <begin position="1241"/>
        <end position="1243"/>
    </location>
</feature>
<feature type="strand" evidence="28">
    <location>
        <begin position="1246"/>
        <end position="1252"/>
    </location>
</feature>
<feature type="strand" evidence="32">
    <location>
        <begin position="1259"/>
        <end position="1261"/>
    </location>
</feature>
<feature type="helix" evidence="28">
    <location>
        <begin position="1262"/>
        <end position="1264"/>
    </location>
</feature>
<feature type="helix" evidence="28">
    <location>
        <begin position="1271"/>
        <end position="1276"/>
    </location>
</feature>
<feature type="helix" evidence="28">
    <location>
        <begin position="1277"/>
        <end position="1293"/>
    </location>
</feature>
<feature type="helix" evidence="28">
    <location>
        <begin position="1308"/>
        <end position="1314"/>
    </location>
</feature>
<feature type="helix" evidence="28">
    <location>
        <begin position="1318"/>
        <end position="1322"/>
    </location>
</feature>
<feature type="helix" evidence="28">
    <location>
        <begin position="1328"/>
        <end position="1330"/>
    </location>
</feature>
<comment type="function">
    <text evidence="7 8 9 10 11 12 13 15 17">Oxidase with broad substrate specificity, oxidizing aromatic azaheterocycles, such as N1-methylnicotinamide, N-methylphthalazinium and phthalazine, as well as aldehydes, such as benzaldehyde, retinal, pyridoxal, and vanillin. Plays a key role in the metabolism of xenobiotics and drugs containing aromatic azaheterocyclic substituents. Participates in the bioactivation of prodrugs such as famciclovir, catalyzing the oxidation step from 6-deoxypenciclovir to penciclovir, which is a potent antiviral agent. Is probably involved in the regulation of reactive oxygen species homeostasis. May be a prominent source of superoxide generation via the one-electron reduction of molecular oxygen. May also catalyze nitric oxide (NO) production via the reduction of nitrite to NO with NADH or aldehyde as electron donor. May play a role in adipogenesis.</text>
</comment>
<comment type="catalytic activity">
    <reaction evidence="11 13">
        <text>an aldehyde + O2 + H2O = a carboxylate + H2O2 + H(+)</text>
        <dbReference type="Rhea" id="RHEA:16829"/>
        <dbReference type="ChEBI" id="CHEBI:15377"/>
        <dbReference type="ChEBI" id="CHEBI:15378"/>
        <dbReference type="ChEBI" id="CHEBI:15379"/>
        <dbReference type="ChEBI" id="CHEBI:16240"/>
        <dbReference type="ChEBI" id="CHEBI:17478"/>
        <dbReference type="ChEBI" id="CHEBI:29067"/>
        <dbReference type="EC" id="1.2.3.1"/>
    </reaction>
</comment>
<comment type="catalytic activity">
    <reaction evidence="1">
        <text>retinal + O2 + H2O = retinoate + H2O2 + H(+)</text>
        <dbReference type="Rhea" id="RHEA:56736"/>
        <dbReference type="ChEBI" id="CHEBI:15035"/>
        <dbReference type="ChEBI" id="CHEBI:15036"/>
        <dbReference type="ChEBI" id="CHEBI:15377"/>
        <dbReference type="ChEBI" id="CHEBI:15378"/>
        <dbReference type="ChEBI" id="CHEBI:15379"/>
        <dbReference type="ChEBI" id="CHEBI:16240"/>
    </reaction>
</comment>
<comment type="cofactor">
    <cofactor evidence="9 13 14">
        <name>[2Fe-2S] cluster</name>
        <dbReference type="ChEBI" id="CHEBI:190135"/>
    </cofactor>
    <text evidence="9 13">Binds 2 [2Fe-2S] clusters per subunit.</text>
</comment>
<comment type="cofactor">
    <cofactor evidence="9 13">
        <name>FAD</name>
        <dbReference type="ChEBI" id="CHEBI:57692"/>
    </cofactor>
    <text evidence="9 13">Binds 1 FAD per subunit.</text>
</comment>
<comment type="cofactor">
    <cofactor evidence="9 13 14">
        <name>Mo-molybdopterin</name>
        <dbReference type="ChEBI" id="CHEBI:71302"/>
    </cofactor>
    <text evidence="9 13">Binds 1 Mo-molybdopterin (Mo-MPT) cofactor per subunit.</text>
</comment>
<comment type="activity regulation">
    <text evidence="8 10 11 13 14 17">Is very potently inhibited by raloxifene (PubMed:26842593). Also inhibited by estradiol, ethinyl estradiol, hydralazine, menadione, isovanillin and thioridazine. Not inhibited by allopurinol, a xanthine dehydrogenase potent inhibitor (PubMed:22031625, PubMed:22522748, PubMed:22996261, PubMed:26322824, PubMed:9224775).</text>
</comment>
<comment type="biophysicochemical properties">
    <kinetics>
        <KM evidence="14">4.6 uM for benzaldehyde (in the presence of 2,6-dichlorophenol indophenol as electron acceptor)</KM>
        <KM evidence="14">45.18 uM for benzaldehyde (in the presence of ferricyanide as electron acceptor)</KM>
        <KM evidence="9">1.3 uM for phthalazine (at 25 degrees Celsius and pH 7.5)</KM>
        <KM evidence="14">8.96 uM for phthalazine (in the presence of 2,6-dichlorophenol indophenol as electron acceptor)</KM>
        <KM evidence="14">125.7 uM for phthalazine (in the presence of ferricyanide as electron acceptor)</KM>
        <KM evidence="14">0.78 uM for phenanthridine (in the pres 2,6-dichlorophenol indophenol as electron acceptor)</KM>
        <KM evidence="14">25.5 uM for phenanthridine (in the presence of ferricyanide as electron acceptor)</KM>
        <KM evidence="14">26.53 uM for phenanthridine (in the presence of molecular oxygen as electron acceptor)</KM>
        <KM evidence="9">3.9 uM for phenanthridine (at 25 degrees Celsius and pH 7.5)</KM>
        <KM evidence="9">5.2 uM for chloroquinazolinone (at 25 degrees Celsius and pH 7.5)</KM>
        <KM evidence="17">0.42 mM for 6-deoxypenciclovir (at 37 degrees Celsius and pH 7)</KM>
        <KM evidence="17">0.15 mM for famciclovir (at 37 degrees Celsius and pH 7)</KM>
        <KM evidence="11">6.3 uM for N-[(2-dimethylamino)ethyl]acridine-4-carboxamide (at 37 degrees Celsius and pH 7.4)</KM>
        <Vmax evidence="17">16.0 nmol/min/mg enzyme with 6-deoxypenciclovir as substrate</Vmax>
        <Vmax evidence="17">61.0 nmol/min/mg enzyme with famciclovir as substrate</Vmax>
        <Vmax evidence="11">2.3 nmol/min/mg enzyme with N-[(2-dimethylamino)ethyl]acridine-4-carboxamide as substrate</Vmax>
        <text evidence="9">kcat is 6.4 min(-1) for benzaldehyde oxidation, 5.6 min(-1) for phthalazine oxidation, 12.2 min(-1) for phenanthridine oxidation and 5.6 min(-1) for chloroquinazolinone oxidation.</text>
    </kinetics>
</comment>
<comment type="subunit">
    <text evidence="13 14">Homodimer.</text>
</comment>
<comment type="interaction">
    <interactant intactId="EBI-3926368">
        <id>Q06278</id>
    </interactant>
    <interactant intactId="EBI-3926368">
        <id>Q06278</id>
        <label>AOX1</label>
    </interactant>
    <organismsDiffer>false</organismsDiffer>
    <experiments>2</experiments>
</comment>
<comment type="subcellular location">
    <subcellularLocation>
        <location evidence="6 7 12">Cytoplasm</location>
    </subcellularLocation>
</comment>
<comment type="tissue specificity">
    <text evidence="5 6 7 8 10 12 16">Abundant in liver, expressed in adipose tissue and at lower levels in lung, skeletal muscle, pancreas. In contrast to mice, no significant gender difference in AOX1 expression level (at protein level).</text>
</comment>
<comment type="developmental stage">
    <text evidence="6">Not detected in preadipocytes but strongly induced in mature adipocytes.</text>
</comment>
<comment type="induction">
    <text evidence="4">In liver, is down-regulated by adiponectin and by the PPARA agonist, fenofibric acid.</text>
</comment>
<comment type="miscellaneous">
    <text evidence="19">AOX genes evolved from a xanthine oxidoreductase ancestral precursor via a series of gene duplication and suppression/deletion events. Different animal species contain a different complement of AOX genes encoding an equivalent number of AOX isoenzymes. In mammals, the two extremes are represented by certain rodents such as mice and rats, which are endowed with 4 AOX genes, and by humans, whose genome is characterized by a single active gene (PubMed:22335465).</text>
</comment>
<comment type="similarity">
    <text evidence="18">Belongs to the xanthine dehydrogenase family.</text>
</comment>
<comment type="caution">
    <text evidence="21">Was originally thought to be a xanthine dehydrogenase.</text>
</comment>
<comment type="sequence caution" evidence="18">
    <conflict type="frameshift">
        <sequence resource="EMBL-CDS" id="AAA96650"/>
    </conflict>
</comment>
<comment type="sequence caution" evidence="18">
    <conflict type="frameshift">
        <sequence resource="EMBL-CDS" id="AAB83966"/>
    </conflict>
</comment>
<dbReference type="EC" id="1.2.3.1" evidence="11 13"/>
<dbReference type="EC" id="1.17.3.-" evidence="15 17"/>
<dbReference type="EMBL" id="L11005">
    <property type="protein sequence ID" value="AAA96650.1"/>
    <property type="status" value="ALT_FRAME"/>
    <property type="molecule type" value="mRNA"/>
</dbReference>
<dbReference type="EMBL" id="AF017060">
    <property type="protein sequence ID" value="AAB83966.1"/>
    <property type="status" value="ALT_FRAME"/>
    <property type="molecule type" value="Genomic_DNA"/>
</dbReference>
<dbReference type="EMBL" id="AF009441">
    <property type="protein sequence ID" value="AAB83966.1"/>
    <property type="status" value="JOINED"/>
    <property type="molecule type" value="Genomic_DNA"/>
</dbReference>
<dbReference type="EMBL" id="AF009442">
    <property type="protein sequence ID" value="AAB83966.1"/>
    <property type="status" value="JOINED"/>
    <property type="molecule type" value="Genomic_DNA"/>
</dbReference>
<dbReference type="EMBL" id="AF009443">
    <property type="protein sequence ID" value="AAB83966.1"/>
    <property type="status" value="JOINED"/>
    <property type="molecule type" value="Genomic_DNA"/>
</dbReference>
<dbReference type="EMBL" id="AF009444">
    <property type="protein sequence ID" value="AAB83966.1"/>
    <property type="status" value="JOINED"/>
    <property type="molecule type" value="Genomic_DNA"/>
</dbReference>
<dbReference type="EMBL" id="AF009445">
    <property type="protein sequence ID" value="AAB83966.1"/>
    <property type="status" value="JOINED"/>
    <property type="molecule type" value="Genomic_DNA"/>
</dbReference>
<dbReference type="EMBL" id="AF009446">
    <property type="protein sequence ID" value="AAB83966.1"/>
    <property type="status" value="JOINED"/>
    <property type="molecule type" value="Genomic_DNA"/>
</dbReference>
<dbReference type="EMBL" id="AF009447">
    <property type="protein sequence ID" value="AAB83966.1"/>
    <property type="status" value="JOINED"/>
    <property type="molecule type" value="Genomic_DNA"/>
</dbReference>
<dbReference type="EMBL" id="AF009448">
    <property type="protein sequence ID" value="AAB83966.1"/>
    <property type="status" value="JOINED"/>
    <property type="molecule type" value="Genomic_DNA"/>
</dbReference>
<dbReference type="EMBL" id="AF009449">
    <property type="protein sequence ID" value="AAB83966.1"/>
    <property type="status" value="JOINED"/>
    <property type="molecule type" value="Genomic_DNA"/>
</dbReference>
<dbReference type="EMBL" id="AF009450">
    <property type="protein sequence ID" value="AAB83966.1"/>
    <property type="status" value="JOINED"/>
    <property type="molecule type" value="Genomic_DNA"/>
</dbReference>
<dbReference type="EMBL" id="AF009451">
    <property type="protein sequence ID" value="AAB83966.1"/>
    <property type="status" value="JOINED"/>
    <property type="molecule type" value="Genomic_DNA"/>
</dbReference>
<dbReference type="EMBL" id="AF009452">
    <property type="protein sequence ID" value="AAB83966.1"/>
    <property type="status" value="JOINED"/>
    <property type="molecule type" value="Genomic_DNA"/>
</dbReference>
<dbReference type="EMBL" id="AF009453">
    <property type="protein sequence ID" value="AAB83966.1"/>
    <property type="status" value="JOINED"/>
    <property type="molecule type" value="Genomic_DNA"/>
</dbReference>
<dbReference type="EMBL" id="AF009454">
    <property type="protein sequence ID" value="AAB83966.1"/>
    <property type="status" value="JOINED"/>
    <property type="molecule type" value="Genomic_DNA"/>
</dbReference>
<dbReference type="EMBL" id="AF009455">
    <property type="protein sequence ID" value="AAB83966.1"/>
    <property type="status" value="JOINED"/>
    <property type="molecule type" value="Genomic_DNA"/>
</dbReference>
<dbReference type="EMBL" id="AF009456">
    <property type="protein sequence ID" value="AAB83966.1"/>
    <property type="status" value="JOINED"/>
    <property type="molecule type" value="Genomic_DNA"/>
</dbReference>
<dbReference type="EMBL" id="AF009457">
    <property type="protein sequence ID" value="AAB83966.1"/>
    <property type="status" value="JOINED"/>
    <property type="molecule type" value="Genomic_DNA"/>
</dbReference>
<dbReference type="EMBL" id="AF009458">
    <property type="protein sequence ID" value="AAB83966.1"/>
    <property type="status" value="JOINED"/>
    <property type="molecule type" value="Genomic_DNA"/>
</dbReference>
<dbReference type="EMBL" id="AF009459">
    <property type="protein sequence ID" value="AAB83966.1"/>
    <property type="status" value="JOINED"/>
    <property type="molecule type" value="Genomic_DNA"/>
</dbReference>
<dbReference type="EMBL" id="AF009460">
    <property type="protein sequence ID" value="AAB83966.1"/>
    <property type="status" value="JOINED"/>
    <property type="molecule type" value="Genomic_DNA"/>
</dbReference>
<dbReference type="EMBL" id="AF009461">
    <property type="protein sequence ID" value="AAB83966.1"/>
    <property type="status" value="JOINED"/>
    <property type="molecule type" value="Genomic_DNA"/>
</dbReference>
<dbReference type="EMBL" id="AF009462">
    <property type="protein sequence ID" value="AAB83966.1"/>
    <property type="status" value="JOINED"/>
    <property type="molecule type" value="Genomic_DNA"/>
</dbReference>
<dbReference type="EMBL" id="AF009463">
    <property type="protein sequence ID" value="AAB83966.1"/>
    <property type="status" value="JOINED"/>
    <property type="molecule type" value="Genomic_DNA"/>
</dbReference>
<dbReference type="EMBL" id="AF009464">
    <property type="protein sequence ID" value="AAB83966.1"/>
    <property type="status" value="JOINED"/>
    <property type="molecule type" value="Genomic_DNA"/>
</dbReference>
<dbReference type="EMBL" id="AF009465">
    <property type="protein sequence ID" value="AAB83966.1"/>
    <property type="status" value="JOINED"/>
    <property type="molecule type" value="Genomic_DNA"/>
</dbReference>
<dbReference type="EMBL" id="AF009466">
    <property type="protein sequence ID" value="AAB83966.1"/>
    <property type="status" value="JOINED"/>
    <property type="molecule type" value="Genomic_DNA"/>
</dbReference>
<dbReference type="EMBL" id="AF009467">
    <property type="protein sequence ID" value="AAB83966.1"/>
    <property type="status" value="JOINED"/>
    <property type="molecule type" value="Genomic_DNA"/>
</dbReference>
<dbReference type="EMBL" id="AF009468">
    <property type="protein sequence ID" value="AAB83966.1"/>
    <property type="status" value="JOINED"/>
    <property type="molecule type" value="Genomic_DNA"/>
</dbReference>
<dbReference type="EMBL" id="AF009469">
    <property type="protein sequence ID" value="AAB83966.1"/>
    <property type="status" value="JOINED"/>
    <property type="molecule type" value="Genomic_DNA"/>
</dbReference>
<dbReference type="EMBL" id="AF009470">
    <property type="protein sequence ID" value="AAB83966.1"/>
    <property type="status" value="JOINED"/>
    <property type="molecule type" value="Genomic_DNA"/>
</dbReference>
<dbReference type="EMBL" id="AF009471">
    <property type="protein sequence ID" value="AAB83966.1"/>
    <property type="status" value="JOINED"/>
    <property type="molecule type" value="Genomic_DNA"/>
</dbReference>
<dbReference type="EMBL" id="AF009472">
    <property type="protein sequence ID" value="AAB83966.1"/>
    <property type="status" value="JOINED"/>
    <property type="molecule type" value="Genomic_DNA"/>
</dbReference>
<dbReference type="EMBL" id="AF009473">
    <property type="protein sequence ID" value="AAB83966.1"/>
    <property type="status" value="JOINED"/>
    <property type="molecule type" value="Genomic_DNA"/>
</dbReference>
<dbReference type="EMBL" id="AF009474">
    <property type="protein sequence ID" value="AAB83966.1"/>
    <property type="status" value="JOINED"/>
    <property type="molecule type" value="Genomic_DNA"/>
</dbReference>
<dbReference type="EMBL" id="AF010260">
    <property type="protein sequence ID" value="AAB83968.1"/>
    <property type="molecule type" value="Genomic_DNA"/>
</dbReference>
<dbReference type="EMBL" id="AB046692">
    <property type="protein sequence ID" value="BAB40305.1"/>
    <property type="molecule type" value="mRNA"/>
</dbReference>
<dbReference type="EMBL" id="AC007163">
    <property type="protein sequence ID" value="AAX93285.1"/>
    <property type="molecule type" value="Genomic_DNA"/>
</dbReference>
<dbReference type="EMBL" id="AC080164">
    <property type="protein sequence ID" value="AAY24265.1"/>
    <property type="molecule type" value="Genomic_DNA"/>
</dbReference>
<dbReference type="EMBL" id="CH471063">
    <property type="protein sequence ID" value="EAW70209.1"/>
    <property type="molecule type" value="Genomic_DNA"/>
</dbReference>
<dbReference type="EMBL" id="BC117179">
    <property type="protein sequence ID" value="AAI17180.1"/>
    <property type="molecule type" value="mRNA"/>
</dbReference>
<dbReference type="EMBL" id="BC117181">
    <property type="protein sequence ID" value="AAI17182.1"/>
    <property type="molecule type" value="mRNA"/>
</dbReference>
<dbReference type="CCDS" id="CCDS33360.1"/>
<dbReference type="PIR" id="A49634">
    <property type="entry name" value="A49634"/>
</dbReference>
<dbReference type="RefSeq" id="NP_001150.3">
    <property type="nucleotide sequence ID" value="NM_001159.3"/>
</dbReference>
<dbReference type="PDB" id="4UHW">
    <property type="method" value="X-ray"/>
    <property type="resolution" value="2.60 A"/>
    <property type="chains" value="A=1-1338"/>
</dbReference>
<dbReference type="PDB" id="4UHX">
    <property type="method" value="X-ray"/>
    <property type="resolution" value="2.70 A"/>
    <property type="chains" value="A=1-1338"/>
</dbReference>
<dbReference type="PDB" id="5EPG">
    <property type="method" value="X-ray"/>
    <property type="resolution" value="3.39 A"/>
    <property type="chains" value="A=1-1338"/>
</dbReference>
<dbReference type="PDB" id="6Q6Q">
    <property type="method" value="X-ray"/>
    <property type="resolution" value="3.10 A"/>
    <property type="chains" value="A=1-1338"/>
</dbReference>
<dbReference type="PDB" id="7OPN">
    <property type="method" value="X-ray"/>
    <property type="resolution" value="2.60 A"/>
    <property type="chains" value="A/B=1-1338"/>
</dbReference>
<dbReference type="PDB" id="7ORC">
    <property type="method" value="X-ray"/>
    <property type="resolution" value="2.70 A"/>
    <property type="chains" value="A/B=1-1338"/>
</dbReference>
<dbReference type="PDB" id="8EMT">
    <property type="method" value="EM"/>
    <property type="resolution" value="2.92 A"/>
    <property type="chains" value="A/B=1-1338"/>
</dbReference>
<dbReference type="PDBsum" id="4UHW"/>
<dbReference type="PDBsum" id="4UHX"/>
<dbReference type="PDBsum" id="5EPG"/>
<dbReference type="PDBsum" id="6Q6Q"/>
<dbReference type="PDBsum" id="7OPN"/>
<dbReference type="PDBsum" id="7ORC"/>
<dbReference type="PDBsum" id="8EMT"/>
<dbReference type="EMDB" id="EMD-28264"/>
<dbReference type="SMR" id="Q06278"/>
<dbReference type="BioGRID" id="106813">
    <property type="interactions" value="11"/>
</dbReference>
<dbReference type="DIP" id="DIP-61698N"/>
<dbReference type="FunCoup" id="Q06278">
    <property type="interactions" value="622"/>
</dbReference>
<dbReference type="IntAct" id="Q06278">
    <property type="interactions" value="5"/>
</dbReference>
<dbReference type="STRING" id="9606.ENSP00000363832"/>
<dbReference type="BindingDB" id="Q06278"/>
<dbReference type="ChEMBL" id="CHEMBL3257"/>
<dbReference type="DrugBank" id="DB00437">
    <property type="generic name" value="Allopurinol"/>
</dbReference>
<dbReference type="DrugBank" id="DB00513">
    <property type="generic name" value="Aminocaproic acid"/>
</dbReference>
<dbReference type="DrugBank" id="DB00484">
    <property type="generic name" value="Brimonidine"/>
</dbReference>
<dbReference type="DrugBank" id="DB11791">
    <property type="generic name" value="Capmatinib"/>
</dbReference>
<dbReference type="DrugBank" id="DB00215">
    <property type="generic name" value="Citalopram"/>
</dbReference>
<dbReference type="DrugBank" id="DB00924">
    <property type="generic name" value="Cyclobenzaprine"/>
</dbReference>
<dbReference type="DrugBank" id="DB03516">
    <property type="generic name" value="Eniluracil"/>
</dbReference>
<dbReference type="DrugBank" id="DB01175">
    <property type="generic name" value="Escitalopram"/>
</dbReference>
<dbReference type="DrugBank" id="DB00426">
    <property type="generic name" value="Famciclovir"/>
</dbReference>
<dbReference type="DrugBank" id="DB12466">
    <property type="generic name" value="Favipiravir"/>
</dbReference>
<dbReference type="DrugBank" id="DB09054">
    <property type="generic name" value="Idelalisib"/>
</dbReference>
<dbReference type="DrugBank" id="DB09078">
    <property type="generic name" value="Lenvatinib"/>
</dbReference>
<dbReference type="DrugBank" id="DB00170">
    <property type="generic name" value="Menadione"/>
</dbReference>
<dbReference type="DrugBank" id="DB01033">
    <property type="generic name" value="Mercaptopurine"/>
</dbReference>
<dbReference type="DrugBank" id="DB00563">
    <property type="generic name" value="Methotrexate"/>
</dbReference>
<dbReference type="DrugBank" id="DB08840">
    <property type="generic name" value="N-methylnicotinamide"/>
</dbReference>
<dbReference type="DrugBank" id="DB00157">
    <property type="generic name" value="NADH"/>
</dbReference>
<dbReference type="DrugBank" id="DB00339">
    <property type="generic name" value="Pyrazinamide"/>
</dbReference>
<dbReference type="DrugBank" id="DB00481">
    <property type="generic name" value="Raloxifene"/>
</dbReference>
<dbReference type="DrugBank" id="DB04827">
    <property type="generic name" value="Urethane"/>
</dbReference>
<dbReference type="DrugBank" id="DB00962">
    <property type="generic name" value="Zaleplon"/>
</dbReference>
<dbReference type="DrugBank" id="DB00246">
    <property type="generic name" value="Ziprasidone"/>
</dbReference>
<dbReference type="DrugBank" id="DB00909">
    <property type="generic name" value="Zonisamide"/>
</dbReference>
<dbReference type="DrugCentral" id="Q06278"/>
<dbReference type="GuidetoPHARMACOLOGY" id="3186"/>
<dbReference type="iPTMnet" id="Q06278"/>
<dbReference type="PhosphoSitePlus" id="Q06278"/>
<dbReference type="BioMuta" id="AOX1"/>
<dbReference type="DMDM" id="215273968"/>
<dbReference type="jPOST" id="Q06278"/>
<dbReference type="MassIVE" id="Q06278"/>
<dbReference type="PaxDb" id="9606-ENSP00000363832"/>
<dbReference type="PeptideAtlas" id="Q06278"/>
<dbReference type="ProteomicsDB" id="58430"/>
<dbReference type="Antibodypedia" id="34105">
    <property type="antibodies" value="240 antibodies from 28 providers"/>
</dbReference>
<dbReference type="DNASU" id="316"/>
<dbReference type="Ensembl" id="ENST00000374700.7">
    <property type="protein sequence ID" value="ENSP00000363832.2"/>
    <property type="gene ID" value="ENSG00000138356.14"/>
</dbReference>
<dbReference type="GeneID" id="316"/>
<dbReference type="KEGG" id="hsa:316"/>
<dbReference type="MANE-Select" id="ENST00000374700.7">
    <property type="protein sequence ID" value="ENSP00000363832.2"/>
    <property type="RefSeq nucleotide sequence ID" value="NM_001159.4"/>
    <property type="RefSeq protein sequence ID" value="NP_001150.3"/>
</dbReference>
<dbReference type="UCSC" id="uc002uvx.4">
    <property type="organism name" value="human"/>
</dbReference>
<dbReference type="AGR" id="HGNC:553"/>
<dbReference type="CTD" id="316"/>
<dbReference type="DisGeNET" id="316"/>
<dbReference type="GeneCards" id="AOX1"/>
<dbReference type="HGNC" id="HGNC:553">
    <property type="gene designation" value="AOX1"/>
</dbReference>
<dbReference type="HPA" id="ENSG00000138356">
    <property type="expression patterns" value="Group enriched (adrenal gland, liver)"/>
</dbReference>
<dbReference type="MIM" id="602841">
    <property type="type" value="gene"/>
</dbReference>
<dbReference type="neXtProt" id="NX_Q06278"/>
<dbReference type="OpenTargets" id="ENSG00000138356"/>
<dbReference type="PharmGKB" id="PA24842"/>
<dbReference type="VEuPathDB" id="HostDB:ENSG00000138356"/>
<dbReference type="eggNOG" id="KOG0430">
    <property type="taxonomic scope" value="Eukaryota"/>
</dbReference>
<dbReference type="GeneTree" id="ENSGT00950000183114"/>
<dbReference type="HOGENOM" id="CLU_001681_1_2_1"/>
<dbReference type="InParanoid" id="Q06278"/>
<dbReference type="OMA" id="QCRWKVG"/>
<dbReference type="OrthoDB" id="8300278at2759"/>
<dbReference type="PAN-GO" id="Q06278">
    <property type="GO annotations" value="1 GO annotation based on evolutionary models"/>
</dbReference>
<dbReference type="PhylomeDB" id="Q06278"/>
<dbReference type="TreeFam" id="TF353036"/>
<dbReference type="BioCyc" id="MetaCyc:ENSG00000138356-MONOMER"/>
<dbReference type="BRENDA" id="1.2.3.1">
    <property type="organism ID" value="2681"/>
</dbReference>
<dbReference type="PathwayCommons" id="Q06278"/>
<dbReference type="Reactome" id="R-HSA-964975">
    <property type="pathway name" value="Vitamin B6 activation to pyridoxal phosphate"/>
</dbReference>
<dbReference type="SABIO-RK" id="Q06278"/>
<dbReference type="SignaLink" id="Q06278"/>
<dbReference type="BioGRID-ORCS" id="316">
    <property type="hits" value="14 hits in 1150 CRISPR screens"/>
</dbReference>
<dbReference type="ChiTaRS" id="AOX1">
    <property type="organism name" value="human"/>
</dbReference>
<dbReference type="EvolutionaryTrace" id="Q06278"/>
<dbReference type="GeneWiki" id="Aldehyde_oxidase_1"/>
<dbReference type="GenomeRNAi" id="316"/>
<dbReference type="Pharos" id="Q06278">
    <property type="development level" value="Tchem"/>
</dbReference>
<dbReference type="PRO" id="PR:Q06278"/>
<dbReference type="Proteomes" id="UP000005640">
    <property type="component" value="Chromosome 2"/>
</dbReference>
<dbReference type="RNAct" id="Q06278">
    <property type="molecule type" value="protein"/>
</dbReference>
<dbReference type="Bgee" id="ENSG00000138356">
    <property type="expression patterns" value="Expressed in right adrenal gland cortex and 162 other cell types or tissues"/>
</dbReference>
<dbReference type="ExpressionAtlas" id="Q06278">
    <property type="expression patterns" value="baseline and differential"/>
</dbReference>
<dbReference type="GO" id="GO:0005829">
    <property type="term" value="C:cytosol"/>
    <property type="evidence" value="ECO:0000314"/>
    <property type="project" value="UniProtKB"/>
</dbReference>
<dbReference type="GO" id="GO:0070062">
    <property type="term" value="C:extracellular exosome"/>
    <property type="evidence" value="ECO:0007005"/>
    <property type="project" value="UniProtKB"/>
</dbReference>
<dbReference type="GO" id="GO:0045171">
    <property type="term" value="C:intercellular bridge"/>
    <property type="evidence" value="ECO:0000314"/>
    <property type="project" value="HPA"/>
</dbReference>
<dbReference type="GO" id="GO:0015630">
    <property type="term" value="C:microtubule cytoskeleton"/>
    <property type="evidence" value="ECO:0000314"/>
    <property type="project" value="HPA"/>
</dbReference>
<dbReference type="GO" id="GO:0016604">
    <property type="term" value="C:nuclear body"/>
    <property type="evidence" value="ECO:0000314"/>
    <property type="project" value="HPA"/>
</dbReference>
<dbReference type="GO" id="GO:0051537">
    <property type="term" value="F:2 iron, 2 sulfur cluster binding"/>
    <property type="evidence" value="ECO:0000314"/>
    <property type="project" value="UniProtKB"/>
</dbReference>
<dbReference type="GO" id="GO:0004031">
    <property type="term" value="F:aldehyde oxidase activity"/>
    <property type="evidence" value="ECO:0000314"/>
    <property type="project" value="UniProtKB"/>
</dbReference>
<dbReference type="GO" id="GO:0071949">
    <property type="term" value="F:FAD binding"/>
    <property type="evidence" value="ECO:0007669"/>
    <property type="project" value="InterPro"/>
</dbReference>
<dbReference type="GO" id="GO:0050660">
    <property type="term" value="F:flavin adenine dinucleotide binding"/>
    <property type="evidence" value="ECO:0000314"/>
    <property type="project" value="UniProtKB"/>
</dbReference>
<dbReference type="GO" id="GO:0042802">
    <property type="term" value="F:identical protein binding"/>
    <property type="evidence" value="ECO:0000353"/>
    <property type="project" value="IntAct"/>
</dbReference>
<dbReference type="GO" id="GO:0005506">
    <property type="term" value="F:iron ion binding"/>
    <property type="evidence" value="ECO:0000314"/>
    <property type="project" value="UniProtKB"/>
</dbReference>
<dbReference type="GO" id="GO:0043546">
    <property type="term" value="F:molybdopterin cofactor binding"/>
    <property type="evidence" value="ECO:0000314"/>
    <property type="project" value="UniProtKB"/>
</dbReference>
<dbReference type="GO" id="GO:0051287">
    <property type="term" value="F:NAD binding"/>
    <property type="evidence" value="ECO:0007669"/>
    <property type="project" value="InterPro"/>
</dbReference>
<dbReference type="GO" id="GO:0042803">
    <property type="term" value="F:protein homodimerization activity"/>
    <property type="evidence" value="ECO:0000314"/>
    <property type="project" value="UniProtKB"/>
</dbReference>
<dbReference type="GO" id="GO:0006629">
    <property type="term" value="P:lipid metabolic process"/>
    <property type="evidence" value="ECO:0007669"/>
    <property type="project" value="UniProtKB-KW"/>
</dbReference>
<dbReference type="GO" id="GO:0006805">
    <property type="term" value="P:xenobiotic metabolic process"/>
    <property type="evidence" value="ECO:0000314"/>
    <property type="project" value="UniProtKB"/>
</dbReference>
<dbReference type="FunFam" id="1.10.150.120:FF:000001">
    <property type="entry name" value="Aldehyde oxidase 1"/>
    <property type="match status" value="1"/>
</dbReference>
<dbReference type="FunFam" id="3.10.20.30:FF:000015">
    <property type="entry name" value="Aldehyde oxidase 1"/>
    <property type="match status" value="1"/>
</dbReference>
<dbReference type="FunFam" id="3.30.365.10:FF:000003">
    <property type="entry name" value="Aldehyde oxidase 1"/>
    <property type="match status" value="1"/>
</dbReference>
<dbReference type="FunFam" id="3.90.1170.50:FF:000001">
    <property type="entry name" value="Aldehyde oxidase 1"/>
    <property type="match status" value="1"/>
</dbReference>
<dbReference type="FunFam" id="3.30.365.10:FF:000004">
    <property type="entry name" value="Xanthine dehydrogenase oxidase"/>
    <property type="match status" value="1"/>
</dbReference>
<dbReference type="FunFam" id="3.30.390.50:FF:000001">
    <property type="entry name" value="Xanthine dehydrogenase oxidase"/>
    <property type="match status" value="1"/>
</dbReference>
<dbReference type="FunFam" id="3.30.43.10:FF:000001">
    <property type="entry name" value="Xanthine dehydrogenase/oxidase"/>
    <property type="match status" value="1"/>
</dbReference>
<dbReference type="FunFam" id="3.30.465.10:FF:000004">
    <property type="entry name" value="Xanthine dehydrogenase/oxidase"/>
    <property type="match status" value="1"/>
</dbReference>
<dbReference type="Gene3D" id="3.10.20.30">
    <property type="match status" value="1"/>
</dbReference>
<dbReference type="Gene3D" id="3.30.465.10">
    <property type="match status" value="1"/>
</dbReference>
<dbReference type="Gene3D" id="1.10.150.120">
    <property type="entry name" value="[2Fe-2S]-binding domain"/>
    <property type="match status" value="1"/>
</dbReference>
<dbReference type="Gene3D" id="3.90.1170.50">
    <property type="entry name" value="Aldehyde oxidase/xanthine dehydrogenase, a/b hammerhead"/>
    <property type="match status" value="1"/>
</dbReference>
<dbReference type="Gene3D" id="3.30.365.10">
    <property type="entry name" value="Aldehyde oxidase/xanthine dehydrogenase, molybdopterin binding domain"/>
    <property type="match status" value="4"/>
</dbReference>
<dbReference type="Gene3D" id="3.30.390.50">
    <property type="entry name" value="CO dehydrogenase flavoprotein, C-terminal domain"/>
    <property type="match status" value="1"/>
</dbReference>
<dbReference type="Gene3D" id="3.30.43.10">
    <property type="entry name" value="Uridine Diphospho-n-acetylenolpyruvylglucosamine Reductase, domain 2"/>
    <property type="match status" value="1"/>
</dbReference>
<dbReference type="InterPro" id="IPR002888">
    <property type="entry name" value="2Fe-2S-bd"/>
</dbReference>
<dbReference type="InterPro" id="IPR036884">
    <property type="entry name" value="2Fe-2S-bd_dom_sf"/>
</dbReference>
<dbReference type="InterPro" id="IPR036010">
    <property type="entry name" value="2Fe-2S_ferredoxin-like_sf"/>
</dbReference>
<dbReference type="InterPro" id="IPR001041">
    <property type="entry name" value="2Fe-2S_ferredoxin-type"/>
</dbReference>
<dbReference type="InterPro" id="IPR006058">
    <property type="entry name" value="2Fe2S_fd_BS"/>
</dbReference>
<dbReference type="InterPro" id="IPR000674">
    <property type="entry name" value="Ald_Oxase/Xan_DH_a/b"/>
</dbReference>
<dbReference type="InterPro" id="IPR036856">
    <property type="entry name" value="Ald_Oxase/Xan_DH_a/b_sf"/>
</dbReference>
<dbReference type="InterPro" id="IPR016208">
    <property type="entry name" value="Ald_Oxase/xanthine_DH-like"/>
</dbReference>
<dbReference type="InterPro" id="IPR014313">
    <property type="entry name" value="Aldehyde_oxidase"/>
</dbReference>
<dbReference type="InterPro" id="IPR008274">
    <property type="entry name" value="AldOxase/xan_DH_MoCoBD1"/>
</dbReference>
<dbReference type="InterPro" id="IPR046867">
    <property type="entry name" value="AldOxase/xan_DH_MoCoBD2"/>
</dbReference>
<dbReference type="InterPro" id="IPR037165">
    <property type="entry name" value="AldOxase/xan_DH_Mopterin-bd_sf"/>
</dbReference>
<dbReference type="InterPro" id="IPR012675">
    <property type="entry name" value="Beta-grasp_dom_sf"/>
</dbReference>
<dbReference type="InterPro" id="IPR005107">
    <property type="entry name" value="CO_DH_flav_C"/>
</dbReference>
<dbReference type="InterPro" id="IPR036683">
    <property type="entry name" value="CO_DH_flav_C_dom_sf"/>
</dbReference>
<dbReference type="InterPro" id="IPR016166">
    <property type="entry name" value="FAD-bd_PCMH"/>
</dbReference>
<dbReference type="InterPro" id="IPR036318">
    <property type="entry name" value="FAD-bd_PCMH-like_sf"/>
</dbReference>
<dbReference type="InterPro" id="IPR016167">
    <property type="entry name" value="FAD-bd_PCMH_sub1"/>
</dbReference>
<dbReference type="InterPro" id="IPR016169">
    <property type="entry name" value="FAD-bd_PCMH_sub2"/>
</dbReference>
<dbReference type="InterPro" id="IPR002346">
    <property type="entry name" value="Mopterin_DH_FAD-bd"/>
</dbReference>
<dbReference type="InterPro" id="IPR022407">
    <property type="entry name" value="OxRdtase_Mopterin_BS"/>
</dbReference>
<dbReference type="NCBIfam" id="TIGR02969">
    <property type="entry name" value="mam_aldehyde_ox"/>
    <property type="match status" value="1"/>
</dbReference>
<dbReference type="PANTHER" id="PTHR45444">
    <property type="entry name" value="XANTHINE DEHYDROGENASE"/>
    <property type="match status" value="1"/>
</dbReference>
<dbReference type="PANTHER" id="PTHR45444:SF3">
    <property type="entry name" value="XANTHINE DEHYDROGENASE"/>
    <property type="match status" value="1"/>
</dbReference>
<dbReference type="Pfam" id="PF01315">
    <property type="entry name" value="Ald_Xan_dh_C"/>
    <property type="match status" value="1"/>
</dbReference>
<dbReference type="Pfam" id="PF03450">
    <property type="entry name" value="CO_deh_flav_C"/>
    <property type="match status" value="1"/>
</dbReference>
<dbReference type="Pfam" id="PF00941">
    <property type="entry name" value="FAD_binding_5"/>
    <property type="match status" value="1"/>
</dbReference>
<dbReference type="Pfam" id="PF00111">
    <property type="entry name" value="Fer2"/>
    <property type="match status" value="1"/>
</dbReference>
<dbReference type="Pfam" id="PF01799">
    <property type="entry name" value="Fer2_2"/>
    <property type="match status" value="1"/>
</dbReference>
<dbReference type="Pfam" id="PF02738">
    <property type="entry name" value="MoCoBD_1"/>
    <property type="match status" value="1"/>
</dbReference>
<dbReference type="Pfam" id="PF20256">
    <property type="entry name" value="MoCoBD_2"/>
    <property type="match status" value="1"/>
</dbReference>
<dbReference type="PIRSF" id="PIRSF000127">
    <property type="entry name" value="Xanthine_DH"/>
    <property type="match status" value="1"/>
</dbReference>
<dbReference type="SMART" id="SM01008">
    <property type="entry name" value="Ald_Xan_dh_C"/>
    <property type="match status" value="1"/>
</dbReference>
<dbReference type="SMART" id="SM01092">
    <property type="entry name" value="CO_deh_flav_C"/>
    <property type="match status" value="1"/>
</dbReference>
<dbReference type="SUPFAM" id="SSF54292">
    <property type="entry name" value="2Fe-2S ferredoxin-like"/>
    <property type="match status" value="1"/>
</dbReference>
<dbReference type="SUPFAM" id="SSF55447">
    <property type="entry name" value="CO dehydrogenase flavoprotein C-terminal domain-like"/>
    <property type="match status" value="1"/>
</dbReference>
<dbReference type="SUPFAM" id="SSF47741">
    <property type="entry name" value="CO dehydrogenase ISP C-domain like"/>
    <property type="match status" value="1"/>
</dbReference>
<dbReference type="SUPFAM" id="SSF54665">
    <property type="entry name" value="CO dehydrogenase molybdoprotein N-domain-like"/>
    <property type="match status" value="1"/>
</dbReference>
<dbReference type="SUPFAM" id="SSF56176">
    <property type="entry name" value="FAD-binding/transporter-associated domain-like"/>
    <property type="match status" value="1"/>
</dbReference>
<dbReference type="SUPFAM" id="SSF56003">
    <property type="entry name" value="Molybdenum cofactor-binding domain"/>
    <property type="match status" value="1"/>
</dbReference>
<dbReference type="PROSITE" id="PS00197">
    <property type="entry name" value="2FE2S_FER_1"/>
    <property type="match status" value="1"/>
</dbReference>
<dbReference type="PROSITE" id="PS51085">
    <property type="entry name" value="2FE2S_FER_2"/>
    <property type="match status" value="1"/>
</dbReference>
<dbReference type="PROSITE" id="PS51387">
    <property type="entry name" value="FAD_PCMH"/>
    <property type="match status" value="1"/>
</dbReference>
<dbReference type="PROSITE" id="PS00559">
    <property type="entry name" value="MOLYBDOPTERIN_EUK"/>
    <property type="match status" value="1"/>
</dbReference>
<accession>Q06278</accession>
<accession>O14765</accession>
<accession>Q53RR8</accession>
<accession>Q53TV3</accession>
<accession>Q9BYF0</accession>
<accession>Q9UPG6</accession>
<organism>
    <name type="scientific">Homo sapiens</name>
    <name type="common">Human</name>
    <dbReference type="NCBI Taxonomy" id="9606"/>
    <lineage>
        <taxon>Eukaryota</taxon>
        <taxon>Metazoa</taxon>
        <taxon>Chordata</taxon>
        <taxon>Craniata</taxon>
        <taxon>Vertebrata</taxon>
        <taxon>Euteleostomi</taxon>
        <taxon>Mammalia</taxon>
        <taxon>Eutheria</taxon>
        <taxon>Euarchontoglires</taxon>
        <taxon>Primates</taxon>
        <taxon>Haplorrhini</taxon>
        <taxon>Catarrhini</taxon>
        <taxon>Hominidae</taxon>
        <taxon>Homo</taxon>
    </lineage>
</organism>
<name>AOXA_HUMAN</name>
<keyword id="KW-0001">2Fe-2S</keyword>
<keyword id="KW-0002">3D-structure</keyword>
<keyword id="KW-0963">Cytoplasm</keyword>
<keyword id="KW-0274">FAD</keyword>
<keyword id="KW-0285">Flavoprotein</keyword>
<keyword id="KW-0408">Iron</keyword>
<keyword id="KW-0411">Iron-sulfur</keyword>
<keyword id="KW-0443">Lipid metabolism</keyword>
<keyword id="KW-0479">Metal-binding</keyword>
<keyword id="KW-0500">Molybdenum</keyword>
<keyword id="KW-0560">Oxidoreductase</keyword>
<keyword id="KW-0597">Phosphoprotein</keyword>
<keyword id="KW-1267">Proteomics identification</keyword>
<keyword id="KW-1185">Reference proteome</keyword>
<protein>
    <recommendedName>
        <fullName evidence="23">Aldehyde oxidase</fullName>
        <ecNumber evidence="11 13">1.2.3.1</ecNumber>
    </recommendedName>
    <alternativeName>
        <fullName>Aldehyde oxidase 1</fullName>
    </alternativeName>
    <alternativeName>
        <fullName evidence="20 22">Azaheterocycle hydroxylase</fullName>
        <ecNumber evidence="15 17">1.17.3.-</ecNumber>
    </alternativeName>
</protein>
<evidence type="ECO:0000250" key="1">
    <source>
        <dbReference type="UniProtKB" id="O54754"/>
    </source>
</evidence>
<evidence type="ECO:0000255" key="2">
    <source>
        <dbReference type="PROSITE-ProRule" id="PRU00465"/>
    </source>
</evidence>
<evidence type="ECO:0000255" key="3">
    <source>
        <dbReference type="PROSITE-ProRule" id="PRU00718"/>
    </source>
</evidence>
<evidence type="ECO:0000269" key="4">
    <source>
    </source>
</evidence>
<evidence type="ECO:0000269" key="5">
    <source>
    </source>
</evidence>
<evidence type="ECO:0000269" key="6">
    <source>
    </source>
</evidence>
<evidence type="ECO:0000269" key="7">
    <source>
    </source>
</evidence>
<evidence type="ECO:0000269" key="8">
    <source>
    </source>
</evidence>
<evidence type="ECO:0000269" key="9">
    <source>
    </source>
</evidence>
<evidence type="ECO:0000269" key="10">
    <source>
    </source>
</evidence>
<evidence type="ECO:0000269" key="11">
    <source>
    </source>
</evidence>
<evidence type="ECO:0000269" key="12">
    <source>
    </source>
</evidence>
<evidence type="ECO:0000269" key="13">
    <source>
    </source>
</evidence>
<evidence type="ECO:0000269" key="14">
    <source>
    </source>
</evidence>
<evidence type="ECO:0000269" key="15">
    <source>
    </source>
</evidence>
<evidence type="ECO:0000269" key="16">
    <source>
    </source>
</evidence>
<evidence type="ECO:0000269" key="17">
    <source>
    </source>
</evidence>
<evidence type="ECO:0000305" key="18"/>
<evidence type="ECO:0000305" key="19">
    <source>
    </source>
</evidence>
<evidence type="ECO:0000305" key="20">
    <source>
    </source>
</evidence>
<evidence type="ECO:0000305" key="21">
    <source>
    </source>
</evidence>
<evidence type="ECO:0000305" key="22">
    <source>
    </source>
</evidence>
<evidence type="ECO:0000312" key="23">
    <source>
        <dbReference type="HGNC" id="HGNC:553"/>
    </source>
</evidence>
<evidence type="ECO:0007744" key="24">
    <source>
        <dbReference type="PDB" id="4UHW"/>
    </source>
</evidence>
<evidence type="ECO:0007744" key="25">
    <source>
        <dbReference type="PDB" id="4UHX"/>
    </source>
</evidence>
<evidence type="ECO:0007744" key="26">
    <source>
        <dbReference type="PDB" id="5EPG"/>
    </source>
</evidence>
<evidence type="ECO:0007744" key="27">
    <source>
    </source>
</evidence>
<evidence type="ECO:0007829" key="28">
    <source>
        <dbReference type="PDB" id="4UHW"/>
    </source>
</evidence>
<evidence type="ECO:0007829" key="29">
    <source>
        <dbReference type="PDB" id="4UHX"/>
    </source>
</evidence>
<evidence type="ECO:0007829" key="30">
    <source>
        <dbReference type="PDB" id="6Q6Q"/>
    </source>
</evidence>
<evidence type="ECO:0007829" key="31">
    <source>
        <dbReference type="PDB" id="7OPN"/>
    </source>
</evidence>
<evidence type="ECO:0007829" key="32">
    <source>
        <dbReference type="PDB" id="8EMT"/>
    </source>
</evidence>
<reference key="1">
    <citation type="journal article" date="1993" name="Proc. Natl. Acad. Sci. U.S.A.">
        <title>cDNA cloning, characterization, and tissue-specific expression of human xanthine dehydrogenase/xanthine oxidase.</title>
        <authorList>
            <person name="Wright R.M."/>
            <person name="Vaitaitis G.M."/>
            <person name="Wilson C.M."/>
            <person name="Repine T.B."/>
            <person name="Terada L.S."/>
            <person name="Repine J.E."/>
        </authorList>
    </citation>
    <scope>NUCLEOTIDE SEQUENCE [MRNA]</scope>
    <scope>TISSUE SPECIFICITY</scope>
    <source>
        <tissue>Liver</tissue>
    </source>
</reference>
<reference key="2">
    <citation type="journal article" date="1997" name="Redox Rep.">
        <title>Molecular cloning, refined chromosomal mapping, and structural analysis of the human gene encoding aldehyde oxidase (AOX1), a candidate for the ALS2 gene.</title>
        <authorList>
            <person name="Wright R.M."/>
            <person name="Weigel L.K."/>
            <person name="Varella-Garcia M."/>
            <person name="Vaitaitis G."/>
            <person name="Repine J.E."/>
        </authorList>
    </citation>
    <scope>NUCLEOTIDE SEQUENCE [GENOMIC DNA]</scope>
</reference>
<reference key="3">
    <citation type="journal article" date="2001" name="Biochem. Biophys. Res. Commun.">
        <title>Mutation of human molybdenum cofactor sulfurase gene is responsible to classical xanthinuria type II.</title>
        <authorList>
            <person name="Ichida K."/>
            <person name="Matsumura T."/>
            <person name="Sakuma R."/>
            <person name="Hosoya T."/>
            <person name="Nishino T."/>
        </authorList>
    </citation>
    <scope>NUCLEOTIDE SEQUENCE [MRNA]</scope>
    <source>
        <tissue>Liver</tissue>
    </source>
</reference>
<reference key="4">
    <citation type="journal article" date="2005" name="Nature">
        <title>Generation and annotation of the DNA sequences of human chromosomes 2 and 4.</title>
        <authorList>
            <person name="Hillier L.W."/>
            <person name="Graves T.A."/>
            <person name="Fulton R.S."/>
            <person name="Fulton L.A."/>
            <person name="Pepin K.H."/>
            <person name="Minx P."/>
            <person name="Wagner-McPherson C."/>
            <person name="Layman D."/>
            <person name="Wylie K."/>
            <person name="Sekhon M."/>
            <person name="Becker M.C."/>
            <person name="Fewell G.A."/>
            <person name="Delehaunty K.D."/>
            <person name="Miner T.L."/>
            <person name="Nash W.E."/>
            <person name="Kremitzki C."/>
            <person name="Oddy L."/>
            <person name="Du H."/>
            <person name="Sun H."/>
            <person name="Bradshaw-Cordum H."/>
            <person name="Ali J."/>
            <person name="Carter J."/>
            <person name="Cordes M."/>
            <person name="Harris A."/>
            <person name="Isak A."/>
            <person name="van Brunt A."/>
            <person name="Nguyen C."/>
            <person name="Du F."/>
            <person name="Courtney L."/>
            <person name="Kalicki J."/>
            <person name="Ozersky P."/>
            <person name="Abbott S."/>
            <person name="Armstrong J."/>
            <person name="Belter E.A."/>
            <person name="Caruso L."/>
            <person name="Cedroni M."/>
            <person name="Cotton M."/>
            <person name="Davidson T."/>
            <person name="Desai A."/>
            <person name="Elliott G."/>
            <person name="Erb T."/>
            <person name="Fronick C."/>
            <person name="Gaige T."/>
            <person name="Haakenson W."/>
            <person name="Haglund K."/>
            <person name="Holmes A."/>
            <person name="Harkins R."/>
            <person name="Kim K."/>
            <person name="Kruchowski S.S."/>
            <person name="Strong C.M."/>
            <person name="Grewal N."/>
            <person name="Goyea E."/>
            <person name="Hou S."/>
            <person name="Levy A."/>
            <person name="Martinka S."/>
            <person name="Mead K."/>
            <person name="McLellan M.D."/>
            <person name="Meyer R."/>
            <person name="Randall-Maher J."/>
            <person name="Tomlinson C."/>
            <person name="Dauphin-Kohlberg S."/>
            <person name="Kozlowicz-Reilly A."/>
            <person name="Shah N."/>
            <person name="Swearengen-Shahid S."/>
            <person name="Snider J."/>
            <person name="Strong J.T."/>
            <person name="Thompson J."/>
            <person name="Yoakum M."/>
            <person name="Leonard S."/>
            <person name="Pearman C."/>
            <person name="Trani L."/>
            <person name="Radionenko M."/>
            <person name="Waligorski J.E."/>
            <person name="Wang C."/>
            <person name="Rock S.M."/>
            <person name="Tin-Wollam A.-M."/>
            <person name="Maupin R."/>
            <person name="Latreille P."/>
            <person name="Wendl M.C."/>
            <person name="Yang S.-P."/>
            <person name="Pohl C."/>
            <person name="Wallis J.W."/>
            <person name="Spieth J."/>
            <person name="Bieri T.A."/>
            <person name="Berkowicz N."/>
            <person name="Nelson J.O."/>
            <person name="Osborne J."/>
            <person name="Ding L."/>
            <person name="Meyer R."/>
            <person name="Sabo A."/>
            <person name="Shotland Y."/>
            <person name="Sinha P."/>
            <person name="Wohldmann P.E."/>
            <person name="Cook L.L."/>
            <person name="Hickenbotham M.T."/>
            <person name="Eldred J."/>
            <person name="Williams D."/>
            <person name="Jones T.A."/>
            <person name="She X."/>
            <person name="Ciccarelli F.D."/>
            <person name="Izaurralde E."/>
            <person name="Taylor J."/>
            <person name="Schmutz J."/>
            <person name="Myers R.M."/>
            <person name="Cox D.R."/>
            <person name="Huang X."/>
            <person name="McPherson J.D."/>
            <person name="Mardis E.R."/>
            <person name="Clifton S.W."/>
            <person name="Warren W.C."/>
            <person name="Chinwalla A.T."/>
            <person name="Eddy S.R."/>
            <person name="Marra M.A."/>
            <person name="Ovcharenko I."/>
            <person name="Furey T.S."/>
            <person name="Miller W."/>
            <person name="Eichler E.E."/>
            <person name="Bork P."/>
            <person name="Suyama M."/>
            <person name="Torrents D."/>
            <person name="Waterston R.H."/>
            <person name="Wilson R.K."/>
        </authorList>
    </citation>
    <scope>NUCLEOTIDE SEQUENCE [LARGE SCALE GENOMIC DNA]</scope>
</reference>
<reference key="5">
    <citation type="submission" date="2005-07" db="EMBL/GenBank/DDBJ databases">
        <authorList>
            <person name="Mural R.J."/>
            <person name="Istrail S."/>
            <person name="Sutton G.G."/>
            <person name="Florea L."/>
            <person name="Halpern A.L."/>
            <person name="Mobarry C.M."/>
            <person name="Lippert R."/>
            <person name="Walenz B."/>
            <person name="Shatkay H."/>
            <person name="Dew I."/>
            <person name="Miller J.R."/>
            <person name="Flanigan M.J."/>
            <person name="Edwards N.J."/>
            <person name="Bolanos R."/>
            <person name="Fasulo D."/>
            <person name="Halldorsson B.V."/>
            <person name="Hannenhalli S."/>
            <person name="Turner R."/>
            <person name="Yooseph S."/>
            <person name="Lu F."/>
            <person name="Nusskern D.R."/>
            <person name="Shue B.C."/>
            <person name="Zheng X.H."/>
            <person name="Zhong F."/>
            <person name="Delcher A.L."/>
            <person name="Huson D.H."/>
            <person name="Kravitz S.A."/>
            <person name="Mouchard L."/>
            <person name="Reinert K."/>
            <person name="Remington K.A."/>
            <person name="Clark A.G."/>
            <person name="Waterman M.S."/>
            <person name="Eichler E.E."/>
            <person name="Adams M.D."/>
            <person name="Hunkapiller M.W."/>
            <person name="Myers E.W."/>
            <person name="Venter J.C."/>
        </authorList>
    </citation>
    <scope>NUCLEOTIDE SEQUENCE [LARGE SCALE GENOMIC DNA]</scope>
</reference>
<reference key="6">
    <citation type="journal article" date="2004" name="Genome Res.">
        <title>The status, quality, and expansion of the NIH full-length cDNA project: the Mammalian Gene Collection (MGC).</title>
        <authorList>
            <consortium name="The MGC Project Team"/>
        </authorList>
    </citation>
    <scope>NUCLEOTIDE SEQUENCE [LARGE SCALE MRNA]</scope>
    <source>
        <tissue>Colon</tissue>
    </source>
</reference>
<reference key="7">
    <citation type="journal article" date="1995" name="Arch. Biochem. Biophys.">
        <title>Substrate specificity of human liver aldehyde oxidase toward substituted quinazolines and phthalazines: a comparison with hepatic enzyme from guinea pig, rabbit, and baboon.</title>
        <authorList>
            <person name="Beedham C."/>
            <person name="Critchley D.J."/>
            <person name="Rance D.J."/>
        </authorList>
    </citation>
    <scope>FUNCTION AS AZAHETEROCYCLE OXIDASE</scope>
    <scope>SUBSTRATE SPECIFICITY</scope>
</reference>
<reference key="8">
    <citation type="journal article" date="1997" name="Drug Metab. Dispos.">
        <title>In vitro oxidation of famciclovir and 6-deoxypenciclovir by aldehyde oxidase from human, guinea pig, rabbit, and rat liver.</title>
        <authorList>
            <person name="Rashidi M.R."/>
            <person name="Smith J.A."/>
            <person name="Clarke S.E."/>
            <person name="Beedham C."/>
        </authorList>
    </citation>
    <scope>FUNCTION AS AZAHETEROCYCLE OXIDASE</scope>
    <scope>CATALYTIC ACTIVITY</scope>
    <scope>ACTIVITY REGULATION</scope>
    <scope>BIOPHYSICOCHEMICAL PROPERTIES</scope>
</reference>
<reference key="9">
    <citation type="journal article" date="2006" name="Biochem. Biophys. Res. Commun.">
        <title>Aldehyde oxidase 1 is highly abundant in hepatic steatosis and is down-regulated by adiponectin and fenofibric acid in hepatocytes in vitro.</title>
        <authorList>
            <person name="Neumeier M."/>
            <person name="Weigert J."/>
            <person name="Schaeffler A."/>
            <person name="Weiss T.S."/>
            <person name="Schmidl C."/>
            <person name="Buettner R."/>
            <person name="Bollheimer C."/>
            <person name="Aslanidis C."/>
            <person name="Schoelmerich J."/>
            <person name="Buechler C."/>
        </authorList>
    </citation>
    <scope>INDUCTION</scope>
</reference>
<reference key="10">
    <citation type="journal article" date="2008" name="Cell. Mol. Life Sci.">
        <title>Mammalian aldehyde oxidases: genetics, evolution and biochemistry.</title>
        <authorList>
            <person name="Garattini E."/>
            <person name="Fratelli M."/>
            <person name="Terao M."/>
        </authorList>
    </citation>
    <scope>REVIEW</scope>
    <scope>NOMENCLATURE</scope>
    <scope>TISSUE SPECIFICITY</scope>
</reference>
<reference key="11">
    <citation type="journal article" date="2008" name="FEBS Lett.">
        <title>Small-interference RNA-mediated knock-down of aldehyde oxidase 1 in 3T3-L1 cells impairs adipogenesis and adiponectin release.</title>
        <authorList>
            <person name="Weigert J."/>
            <person name="Neumeier M."/>
            <person name="Bauer S."/>
            <person name="Mages W."/>
            <person name="Schnitzbauer A.A."/>
            <person name="Obed A."/>
            <person name="Groeschl B."/>
            <person name="Hartmann A."/>
            <person name="Schaeffler A."/>
            <person name="Aslanidis C."/>
            <person name="Schoelmerich J."/>
            <person name="Buechler C."/>
        </authorList>
    </citation>
    <scope>TISSUE SPECIFICITY</scope>
    <scope>DEVELOPMENTAL STAGE</scope>
    <scope>SUBCELLULAR LOCATION</scope>
</reference>
<reference key="12">
    <citation type="journal article" date="2010" name="Drug Metab. Dispos.">
        <title>In vitro-in vivo correlation for intrinsic clearance for drugs metabolized by human aldehyde oxidase.</title>
        <authorList>
            <person name="Zientek M."/>
            <person name="Jiang Y."/>
            <person name="Youdim K."/>
            <person name="Obach R.S."/>
        </authorList>
    </citation>
    <scope>FUNCTION AS DRUG-METABOLIZING ENZYME</scope>
    <scope>SUBSTRATE SPECIFICITY</scope>
    <scope>TISSUE SPECIFICITY</scope>
    <scope>SUBCELLULAR LOCATION</scope>
</reference>
<reference key="13">
    <citation type="journal article" date="2012" name="Drug Metab. Dispos.">
        <title>Characterization of aldehyde oxidase enzyme activity in cryopreserved human hepatocytes.</title>
        <authorList>
            <person name="Hutzler J.M."/>
            <person name="Yang Y.S."/>
            <person name="Albaugh D."/>
            <person name="Fullenwider C.L."/>
            <person name="Schmenk J."/>
            <person name="Fisher M.B."/>
        </authorList>
    </citation>
    <scope>FUNCTION AS DRUG-METABOLIZING ENZYME</scope>
    <scope>ACTIVITY REGULATION</scope>
    <scope>SUBSTRATE SPECIFICITY</scope>
    <scope>TISSUE SPECIFICITY</scope>
</reference>
<reference key="14">
    <citation type="journal article" date="2012" name="Drug Metab. Dispos.">
        <title>Hydralazine as a selective probe inactivator of aldehyde oxidase in human hepatocytes: estimation of the contribution of aldehyde oxidase to metabolic clearance.</title>
        <authorList>
            <person name="Strelevitz T.J."/>
            <person name="Orozco C.C."/>
            <person name="Obach R.S."/>
        </authorList>
    </citation>
    <scope>FUNCTION AS DRUG-METABOLIZING ENZYME</scope>
    <scope>ACTIVITY REGULATION</scope>
    <scope>SUBSTRATE SPECIFICITY</scope>
    <scope>TISSUE SPECIFICITY</scope>
</reference>
<reference key="15">
    <citation type="journal article" date="2012" name="Expert Opin. Drug Metab. Toxicol.">
        <title>The role of aldehyde oxidase in drug metabolism.</title>
        <authorList>
            <person name="Garattini E."/>
            <person name="Terao M."/>
        </authorList>
    </citation>
    <scope>REVIEW</scope>
</reference>
<reference key="16">
    <citation type="journal article" date="2013" name="Drug Metab. Dispos.">
        <title>Evidence for substrate-dependent inhibition profiles for human liver aldehyde oxidase.</title>
        <authorList>
            <person name="Barr J.T."/>
            <person name="Jones J.P."/>
        </authorList>
    </citation>
    <scope>FUNCTION AS AZAHETEROCYCLE OXIDASE</scope>
    <scope>CATALYTIC ACTIVITY</scope>
    <scope>ACTIVITY REGULATION</scope>
    <scope>BIOPHYSICOCHEMICAL PROPERTIES</scope>
</reference>
<reference key="17">
    <citation type="journal article" date="2013" name="Drug Metab. Dispos.">
        <title>Aldehyde oxidase 1 (AOX1) in human liver cytosols: quantitative characterization of AOX1 expression level and activity relationship.</title>
        <authorList>
            <person name="Fu C."/>
            <person name="Di L."/>
            <person name="Han X."/>
            <person name="Soderstrom C."/>
            <person name="Snyder M."/>
            <person name="Troutman M.D."/>
            <person name="Obach R.S."/>
            <person name="Zhang H."/>
        </authorList>
    </citation>
    <scope>FUNCTION AS DRUG-METABOLIZING ENZYME</scope>
    <scope>SUBSTRATE SPECIFICITY</scope>
    <scope>TISSUE SPECIFICITY</scope>
    <scope>SUBCELLULAR LOCATION</scope>
    <scope>IDENTIFICATION BY MASS SPECTROMETRY</scope>
</reference>
<reference key="18">
    <citation type="journal article" date="2014" name="J. Proteomics">
        <title>An enzyme assisted RP-RPLC approach for in-depth analysis of human liver phosphoproteome.</title>
        <authorList>
            <person name="Bian Y."/>
            <person name="Song C."/>
            <person name="Cheng K."/>
            <person name="Dong M."/>
            <person name="Wang F."/>
            <person name="Huang J."/>
            <person name="Sun D."/>
            <person name="Wang L."/>
            <person name="Ye M."/>
            <person name="Zou H."/>
        </authorList>
    </citation>
    <scope>PHOSPHORYLATION [LARGE SCALE ANALYSIS] AT SER-1068</scope>
    <scope>IDENTIFICATION BY MASS SPECTROMETRY [LARGE SCALE ANALYSIS]</scope>
    <source>
        <tissue>Liver</tissue>
    </source>
</reference>
<reference key="19">
    <citation type="journal article" date="2015" name="Nat. Chem. Biol.">
        <title>Structural insights into xenobiotic and inhibitor binding to human aldehyde oxidase.</title>
        <authorList>
            <person name="Coelho C."/>
            <person name="Foti A."/>
            <person name="Hartmann T."/>
            <person name="Santos-Silva T."/>
            <person name="Leimkuhler S."/>
            <person name="Romao M.J."/>
        </authorList>
    </citation>
    <scope>X-RAY CRYSTALLOGRAPHY (2.60 ANGSTROMS) IN COMPLEX WITH FAD; IRON-SULFUR (2FE-2S); MOLYBDOPTERIN; AN INHIBITOR AND SUBSTRATE</scope>
    <scope>SUBUNIT</scope>
    <scope>CATALYTIC ACTIVITY</scope>
    <scope>ACTIVITY REGULATION</scope>
    <scope>FUNCTION</scope>
    <scope>COFACTOR</scope>
</reference>
<reference key="20">
    <citation type="journal article" date="2016" name="Drug Metab. Dispos.">
        <title>Optimization of the Expression of Human Aldehyde Oxidase for Investigations of Single-Nucleotide Polymorphisms.</title>
        <authorList>
            <person name="Foti A."/>
            <person name="Hartmann T."/>
            <person name="Coelho C."/>
            <person name="Santos-Silva T."/>
            <person name="Romao M.J."/>
            <person name="Leimkuhler S."/>
        </authorList>
    </citation>
    <scope>X-RAY CRYSTALLOGRAPHY (3.39 ANGSTROMS) OF VARIANT LEU-1271 IN COMPLEX WITH FAD; IRON-SULFUR (2FE-2S) AND MOLYBDOPTERIN</scope>
    <scope>CHARACTERIZATION OF VARIANT LEU-1271</scope>
    <scope>FUNCTION</scope>
    <scope>SUBUNIT</scope>
    <scope>COFACTOR</scope>
    <scope>MUTAGENESIS OF CYS-44 AND GLY-1269</scope>
    <scope>BIOPHYSICOCHEMICAL PROPERTIES</scope>
</reference>
<reference key="21">
    <citation type="journal article" date="2012" name="Drug Metab. Dispos.">
        <title>The impact of single nucleotide polymorphisms on human aldehyde oxidase.</title>
        <authorList>
            <person name="Hartmann T."/>
            <person name="Terao M."/>
            <person name="Garattini E."/>
            <person name="Teutloff C."/>
            <person name="Alfaro J.F."/>
            <person name="Jones J.P."/>
            <person name="Leimkuehler S."/>
        </authorList>
    </citation>
    <scope>VARIANTS CYS-802; HIS-921; SER-1135; LEU-1271 AND ARG-1297</scope>
    <scope>CHARACTERIZATION OF VARIANTS CYS-802; HIS-921; SER-1135 AND ARG-1297</scope>
    <scope>FUNCTION AS OXIDASE</scope>
    <scope>HOMODIMER</scope>
    <scope>COFACTOR</scope>
    <scope>SUBSTRATE SPECIFICITY</scope>
    <scope>BIOPHYSICOCHEMICAL PROPERTIES</scope>
</reference>
<proteinExistence type="evidence at protein level"/>
<sequence length="1338" mass="147918">MDRASELLFYVNGRKVIEKNVDPETMLLPYLRKKLRLTGTKYGCGGGGCGACTVMISRYNPITKRIRHHPANACLIPICSLYGAAVTTVEGIGSTHTRIHPVQERIAKCHGTQCGFCTPGMVMSIYTLLRNHPEPTLDQLTDALGGNLCRCTGYRPIIDACKTFCKTSGCCQSKENGVCCLDQGINGLPEFEEGSKTSPKLFAEEEFLPLDPTQELIFPPELMIMAEKQSQRTRVFGSERMMWFSPVTLKELLEFKFKYPQAPVIMGNTSVGPEVKFKGVFHPVIISPDRIEELSVVNHAYNGLTLGAGLSLAQVKDILADVVQKLPEEKTQMYHALLKHLGTLAGSQIRNMASLGGHIISRHPDSDLNPILAVGNCTLNLLSKEGKRQIPLNEQFLSKCPNADLKPQEILVSVNIPYSRKWEFVSAFRQAQRQENALAIVNSGMRVFFGEGDGIIRELCISYGGVGPATICAKNSCQKLIGRHWNEQMLDIACRLILNEVSLLGSAPGGKVEFKRTLIISFLFKFYLEVSQILKKMDPVHYPSLADKYESALEDLHSKHHCSTLKYQNIGPKQHPEDPIGHPIMHLSGVKHATGEAIYCDDMPLVDQELFLTFVTSSRAHAKIVSIDLSEALSMPGVVDIMTAEHLSDVNSFCFFTEAEKFLATDKVFCVGQLVCAVLADSEVQAKRAAKRVKIVYQDLEPLILTIEESIQHNSSFKPERKLEYGNVDEAFKVVDQILEGEIHMGGQEHFYMETQSMLVVPKGEDQEMDVYVSTQFPKYIQDIVASTLKLPANKVMCHVRRVGGAFGGKVLKTGIIAAVTAFAANKHGRAVRCVLERGEDMLITGGRHPYLGKYKAGFMNDGRILALDMEHYSNAGASLDESLFVIEMGLLKMDNAYKFPNLRCRGWACRTNLPSNTAFRGFGFPQAALITESCITEVAAKCGLSPEKVRIINMYKEIDQTPYKQEINAKNLIQCWRECMAMSSYSLRKVAVEKFNAENYWKKKGLAMVPLKFPVGLGSRAAGQAAALVHIYLDGSVLVTHGGIEMGQGVHTKMIQVVSRELRMPMSNVHLRGTSTETVPNANISGGSVVADLNGLAVKDACQTLLKRLEPIISKNPKGTWKDWAQTAFDESINLSAVGYFRGYESDMNWEKGEGQPFEYFVYGAACSEVEIDCLTGDHKNIRTDIVMDVGCSINPAIDIGQIEGAFIQGMGLYTIEELNYSPQGILHTRGPDQYKIPAICDMPTELHIALLPPSQNSNTLYSSKGLGESGVFLGCSVFFAIHDAVSAARQERGLHGPLTLNSPLTPEKIRMACEDKFTKMIPRDEPGSYVPWNVPI</sequence>